<accession>Q0ZIV5</accession>
<protein>
    <recommendedName>
        <fullName evidence="2">Large ribosomal subunit protein uL23cz/uL23cy</fullName>
    </recommendedName>
    <alternativeName>
        <fullName>50S ribosomal protein L23, chloroplastic</fullName>
    </alternativeName>
</protein>
<dbReference type="EMBL" id="DQ424856">
    <property type="protein sequence ID" value="ABE47576.1"/>
    <property type="molecule type" value="Genomic_DNA"/>
</dbReference>
<dbReference type="EMBL" id="DQ424856">
    <property type="protein sequence ID" value="ABE47599.1"/>
    <property type="molecule type" value="Genomic_DNA"/>
</dbReference>
<dbReference type="SMR" id="Q0ZIV5"/>
<dbReference type="FunCoup" id="Q0ZIV5">
    <property type="interactions" value="83"/>
</dbReference>
<dbReference type="STRING" id="29760.Q0ZIV5"/>
<dbReference type="PaxDb" id="29760-VIT_03s0038g02780.t01"/>
<dbReference type="EnsemblPlants" id="Vitvi03g01408_t001">
    <property type="protein sequence ID" value="Vitvi03g01408_P001"/>
    <property type="gene ID" value="Vitvi03g01408"/>
</dbReference>
<dbReference type="Gramene" id="Vitvi03g01408_t001">
    <property type="protein sequence ID" value="Vitvi03g01408_P001"/>
    <property type="gene ID" value="Vitvi03g01408"/>
</dbReference>
<dbReference type="KEGG" id="vvi:4025025"/>
<dbReference type="KEGG" id="vvi:4025136"/>
<dbReference type="eggNOG" id="ENOG502S1Z9">
    <property type="taxonomic scope" value="Eukaryota"/>
</dbReference>
<dbReference type="InParanoid" id="Q0ZIV5"/>
<dbReference type="OrthoDB" id="1848840at2759"/>
<dbReference type="Proteomes" id="UP000009183">
    <property type="component" value="Chloroplast"/>
</dbReference>
<dbReference type="ExpressionAtlas" id="Q0ZIV5">
    <property type="expression patterns" value="baseline and differential"/>
</dbReference>
<dbReference type="GO" id="GO:0009507">
    <property type="term" value="C:chloroplast"/>
    <property type="evidence" value="ECO:0007669"/>
    <property type="project" value="UniProtKB-SubCell"/>
</dbReference>
<dbReference type="GO" id="GO:0022625">
    <property type="term" value="C:cytosolic large ribosomal subunit"/>
    <property type="evidence" value="ECO:0000318"/>
    <property type="project" value="GO_Central"/>
</dbReference>
<dbReference type="GO" id="GO:0003729">
    <property type="term" value="F:mRNA binding"/>
    <property type="evidence" value="ECO:0007669"/>
    <property type="project" value="UniProtKB-ARBA"/>
</dbReference>
<dbReference type="GO" id="GO:0019843">
    <property type="term" value="F:rRNA binding"/>
    <property type="evidence" value="ECO:0007669"/>
    <property type="project" value="UniProtKB-UniRule"/>
</dbReference>
<dbReference type="GO" id="GO:0003735">
    <property type="term" value="F:structural constituent of ribosome"/>
    <property type="evidence" value="ECO:0000318"/>
    <property type="project" value="GO_Central"/>
</dbReference>
<dbReference type="GO" id="GO:0006412">
    <property type="term" value="P:translation"/>
    <property type="evidence" value="ECO:0007669"/>
    <property type="project" value="UniProtKB-UniRule"/>
</dbReference>
<dbReference type="FunFam" id="3.30.70.330:FF:000002">
    <property type="entry name" value="50S ribosomal protein L23, chloroplastic"/>
    <property type="match status" value="1"/>
</dbReference>
<dbReference type="Gene3D" id="3.30.70.330">
    <property type="match status" value="1"/>
</dbReference>
<dbReference type="HAMAP" id="MF_01369_B">
    <property type="entry name" value="Ribosomal_uL23_B"/>
    <property type="match status" value="1"/>
</dbReference>
<dbReference type="InterPro" id="IPR012677">
    <property type="entry name" value="Nucleotide-bd_a/b_plait_sf"/>
</dbReference>
<dbReference type="InterPro" id="IPR013025">
    <property type="entry name" value="Ribosomal_uL23-like"/>
</dbReference>
<dbReference type="InterPro" id="IPR012678">
    <property type="entry name" value="Ribosomal_uL23/eL15/eS24_sf"/>
</dbReference>
<dbReference type="InterPro" id="IPR001014">
    <property type="entry name" value="Ribosomal_uL23_CS"/>
</dbReference>
<dbReference type="PANTHER" id="PTHR11620">
    <property type="entry name" value="60S RIBOSOMAL PROTEIN L23A"/>
    <property type="match status" value="1"/>
</dbReference>
<dbReference type="Pfam" id="PF00276">
    <property type="entry name" value="Ribosomal_L23"/>
    <property type="match status" value="1"/>
</dbReference>
<dbReference type="SUPFAM" id="SSF54189">
    <property type="entry name" value="Ribosomal proteins S24e, L23 and L15e"/>
    <property type="match status" value="1"/>
</dbReference>
<dbReference type="PROSITE" id="PS00050">
    <property type="entry name" value="RIBOSOMAL_L23"/>
    <property type="match status" value="1"/>
</dbReference>
<name>RK23_VITVI</name>
<comment type="function">
    <text evidence="1">Binds to 23S rRNA.</text>
</comment>
<comment type="subunit">
    <text evidence="1">Part of the 50S ribosomal subunit.</text>
</comment>
<comment type="subcellular location">
    <subcellularLocation>
        <location>Plastid</location>
        <location>Chloroplast</location>
    </subcellularLocation>
</comment>
<comment type="similarity">
    <text evidence="2">Belongs to the universal ribosomal protein uL23 family.</text>
</comment>
<feature type="chain" id="PRO_0000272938" description="Large ribosomal subunit protein uL23cz/uL23cy">
    <location>
        <begin position="1"/>
        <end position="93"/>
    </location>
</feature>
<reference key="1">
    <citation type="journal article" date="2006" name="BMC Evol. Biol.">
        <title>Phylogenetic analyses of Vitis (Vitaceae) based on complete chloroplast genome sequences: effects of taxon sampling and phylogenetic methods on resolving relationships among rosids.</title>
        <authorList>
            <person name="Jansen R.K."/>
            <person name="Kaittanis C."/>
            <person name="Lee S.-B."/>
            <person name="Saski C."/>
            <person name="Tomkins J."/>
            <person name="Alverson A.J."/>
            <person name="Daniell H."/>
        </authorList>
    </citation>
    <scope>NUCLEOTIDE SEQUENCE [LARGE SCALE GENOMIC DNA]</scope>
    <source>
        <strain>cv. Maxxa</strain>
    </source>
</reference>
<keyword id="KW-0150">Chloroplast</keyword>
<keyword id="KW-0934">Plastid</keyword>
<keyword id="KW-1185">Reference proteome</keyword>
<keyword id="KW-0687">Ribonucleoprotein</keyword>
<keyword id="KW-0689">Ribosomal protein</keyword>
<keyword id="KW-0694">RNA-binding</keyword>
<keyword id="KW-0699">rRNA-binding</keyword>
<sequence>MDGIKYAVFTDKSIRLLGKNQYTSNVESGSTRTEIKHWVELFFGVKVIAMNSHRLPGKGRRMGPIMGHTMHYRRMIITLQPGYSIPPLRKKRT</sequence>
<proteinExistence type="inferred from homology"/>
<organism>
    <name type="scientific">Vitis vinifera</name>
    <name type="common">Grape</name>
    <dbReference type="NCBI Taxonomy" id="29760"/>
    <lineage>
        <taxon>Eukaryota</taxon>
        <taxon>Viridiplantae</taxon>
        <taxon>Streptophyta</taxon>
        <taxon>Embryophyta</taxon>
        <taxon>Tracheophyta</taxon>
        <taxon>Spermatophyta</taxon>
        <taxon>Magnoliopsida</taxon>
        <taxon>eudicotyledons</taxon>
        <taxon>Gunneridae</taxon>
        <taxon>Pentapetalae</taxon>
        <taxon>rosids</taxon>
        <taxon>Vitales</taxon>
        <taxon>Vitaceae</taxon>
        <taxon>Viteae</taxon>
        <taxon>Vitis</taxon>
    </lineage>
</organism>
<evidence type="ECO:0000250" key="1"/>
<evidence type="ECO:0000305" key="2"/>
<gene>
    <name type="primary">rpl23-A</name>
</gene>
<gene>
    <name type="primary">rpl23-B</name>
</gene>
<geneLocation type="chloroplast"/>